<comment type="function">
    <text evidence="3">One of an enzyme pair that work together to convert the A antigen to the H antigen of the O blood type, which together release galactosamine. Catalyzes the first step in the conversion, generating the substrate for the subsequent enzyme (FpGalNase, AC P0DTR5). Works on many different A antigen subtypes. Glu-90 probably activates a nucleophilic water molecule to start the deacetylation reaction.</text>
</comment>
<comment type="catalytic activity">
    <reaction evidence="3">
        <text>an N-acetyl-alpha-D-galactosaminyl-(1-&gt;3)-[alpha-L-fucosyl-(1-&gt;2)]-beta-D-galactosyl derivative + H2O = an alpha-D-galactosaminyl-(1-&gt;3)-[alpha-L-fucosyl-(1-&gt;2)]-beta-D-galactosyl derivative + acetate</text>
        <dbReference type="Rhea" id="RHEA:14869"/>
        <dbReference type="ChEBI" id="CHEBI:15377"/>
        <dbReference type="ChEBI" id="CHEBI:30089"/>
        <dbReference type="ChEBI" id="CHEBI:140559"/>
        <dbReference type="ChEBI" id="CHEBI:144802"/>
    </reaction>
</comment>
<comment type="cofactor">
    <cofactor evidence="3">
        <name>a divalent metal cation</name>
        <dbReference type="ChEBI" id="CHEBI:60240"/>
    </cofactor>
</comment>
<comment type="activity regulation">
    <text evidence="3">Inhibited by EDTA.</text>
</comment>
<comment type="biophysicochemical properties">
    <kinetics>
        <KM evidence="3">340 uM for A antigen type 1 penta-MU</KM>
    </kinetics>
    <phDependence>
        <text evidence="3">Optimum pH is 8.0.</text>
    </phDependence>
</comment>
<comment type="domain">
    <text evidence="3">The deacetylase domain is in the N-terminus, while the C-terminus has a CBM32-type carbohydrate-binding domain that is not required for activity on soluble substrates. The CBM32 domain binds preferentially to repeating N-acetyl lactosamine structures.</text>
</comment>
<comment type="biotechnology">
    <text evidence="3">5 ug/ml of this enzyme pair converts A blood type to O blood type in an hour, and can be removed by centrifugation, showing the pair can be used for production of universal type donor blood.</text>
</comment>
<comment type="miscellaneous">
    <text evidence="3">DNA was isolated from a male human fecal sample of AB+ blood type, the sequence was given to UniProtKB by the submitters.</text>
</comment>
<comment type="online information" name="Protein Spotlight">
    <link uri="https://www.proteinspotlight.org/back_issues/220/"/>
    <text>Dropping barriers - Issue 220 of December 2019</text>
</comment>
<reference key="1">
    <citation type="journal article" date="2019" name="Nat. Microbiol.">
        <title>An enzymatic pathway in the human gut microbiome that converts A to universal O type blood.</title>
        <authorList>
            <person name="Rahfeld P."/>
            <person name="Sim L."/>
            <person name="Moon H."/>
            <person name="Constantinescu I."/>
            <person name="Morgan-Lang C."/>
            <person name="Hallam S.J."/>
            <person name="Kizhakkedathu J.N."/>
            <person name="Withers S.G."/>
        </authorList>
    </citation>
    <scope>NUCLEOTIDE SEQUENCE [GENOMIC DNA]</scope>
    <scope>X-RAY CRYSTALLOGRAPHY (1.30 ANGSTROMS) OF 28-509 ALONE AND IN COMPLEX WITH SUBSTRATE ANALOG</scope>
    <scope>FUNCTION</scope>
    <scope>CATALYTIC ACTIVITY</scope>
    <scope>REACTION MECHANISM</scope>
    <scope>COFACTOR</scope>
    <scope>ACTIVITY REGULATION</scope>
    <scope>BIOPHYSICOCHEMICAL PROPERTIES</scope>
    <scope>DOMAIN</scope>
    <scope>BIOTECHNOLOGY</scope>
    <scope>BINDS CARBOHYDRATE</scope>
    <scope>MUTAGENESIS OF GLU-90; CYS-125; ASP-126; HIS-278 AND TYR-341</scope>
</reference>
<evidence type="ECO:0000255" key="1"/>
<evidence type="ECO:0000255" key="2">
    <source>
        <dbReference type="PROSITE-ProRule" id="PRU00081"/>
    </source>
</evidence>
<evidence type="ECO:0000269" key="3">
    <source>
    </source>
</evidence>
<evidence type="ECO:0000303" key="4">
    <source>
    </source>
</evidence>
<evidence type="ECO:0007744" key="5">
    <source>
        <dbReference type="PDB" id="6N1A"/>
    </source>
</evidence>
<evidence type="ECO:0007744" key="6">
    <source>
        <dbReference type="PDB" id="6N1B"/>
    </source>
</evidence>
<organism>
    <name type="scientific">Flavonifractor plautii</name>
    <name type="common">Fusobacterium plautii</name>
    <dbReference type="NCBI Taxonomy" id="292800"/>
    <lineage>
        <taxon>Bacteria</taxon>
        <taxon>Bacillati</taxon>
        <taxon>Bacillota</taxon>
        <taxon>Clostridia</taxon>
        <taxon>Eubacteriales</taxon>
        <taxon>Oscillospiraceae</taxon>
        <taxon>Flavonifractor</taxon>
    </lineage>
</organism>
<proteinExistence type="evidence at protein level"/>
<accession>P0DTR4</accession>
<keyword id="KW-0002">3D-structure</keyword>
<keyword id="KW-0326">Glycosidase</keyword>
<keyword id="KW-0378">Hydrolase</keyword>
<keyword id="KW-0479">Metal-binding</keyword>
<keyword id="KW-0732">Signal</keyword>
<protein>
    <recommendedName>
        <fullName evidence="4">A type blood N-acetyl-alpha-D-galactosamine deacetylase</fullName>
        <ecNumber evidence="3">3.5.1.-</ecNumber>
    </recommendedName>
    <alternativeName>
        <fullName evidence="4">CBM32</fullName>
    </alternativeName>
    <alternativeName>
        <fullName>FpGalNAc deacetylase</fullName>
        <shortName evidence="4">FpGalNAcDeAc</shortName>
    </alternativeName>
</protein>
<dbReference type="EC" id="3.5.1.-" evidence="3"/>
<dbReference type="RefSeq" id="WP_009260926.1">
    <property type="nucleotide sequence ID" value="NZ_WKPS01000046.1"/>
</dbReference>
<dbReference type="PDB" id="6N1A">
    <property type="method" value="X-ray"/>
    <property type="resolution" value="1.60 A"/>
    <property type="chains" value="A=28-509"/>
</dbReference>
<dbReference type="PDB" id="6N1B">
    <property type="method" value="X-ray"/>
    <property type="resolution" value="1.30 A"/>
    <property type="chains" value="A=28-509"/>
</dbReference>
<dbReference type="PDBsum" id="6N1A"/>
<dbReference type="PDBsum" id="6N1B"/>
<dbReference type="SMR" id="P0DTR4"/>
<dbReference type="GO" id="GO:0016798">
    <property type="term" value="F:hydrolase activity, acting on glycosyl bonds"/>
    <property type="evidence" value="ECO:0007669"/>
    <property type="project" value="UniProtKB-KW"/>
</dbReference>
<dbReference type="GO" id="GO:0046872">
    <property type="term" value="F:metal ion binding"/>
    <property type="evidence" value="ECO:0007669"/>
    <property type="project" value="UniProtKB-KW"/>
</dbReference>
<dbReference type="Gene3D" id="2.60.40.1080">
    <property type="match status" value="1"/>
</dbReference>
<dbReference type="Gene3D" id="2.60.120.260">
    <property type="entry name" value="Galactose-binding domain-like"/>
    <property type="match status" value="2"/>
</dbReference>
<dbReference type="Gene3D" id="2.115.10.20">
    <property type="entry name" value="Glycosyl hydrolase domain, family 43"/>
    <property type="match status" value="1"/>
</dbReference>
<dbReference type="InterPro" id="IPR003343">
    <property type="entry name" value="Big_2"/>
</dbReference>
<dbReference type="InterPro" id="IPR000421">
    <property type="entry name" value="FA58C"/>
</dbReference>
<dbReference type="InterPro" id="IPR008979">
    <property type="entry name" value="Galactose-bd-like_sf"/>
</dbReference>
<dbReference type="InterPro" id="IPR023296">
    <property type="entry name" value="Glyco_hydro_beta-prop_sf"/>
</dbReference>
<dbReference type="InterPro" id="IPR008964">
    <property type="entry name" value="Invasin/intimin_cell_adhesion"/>
</dbReference>
<dbReference type="InterPro" id="IPR036278">
    <property type="entry name" value="Sialidase_sf"/>
</dbReference>
<dbReference type="Pfam" id="PF02368">
    <property type="entry name" value="Big_2"/>
    <property type="match status" value="1"/>
</dbReference>
<dbReference type="Pfam" id="PF00754">
    <property type="entry name" value="F5_F8_type_C"/>
    <property type="match status" value="1"/>
</dbReference>
<dbReference type="SMART" id="SM00635">
    <property type="entry name" value="BID_2"/>
    <property type="match status" value="1"/>
</dbReference>
<dbReference type="SUPFAM" id="SSF75005">
    <property type="entry name" value="Arabinanase/levansucrase/invertase"/>
    <property type="match status" value="1"/>
</dbReference>
<dbReference type="SUPFAM" id="SSF49785">
    <property type="entry name" value="Galactose-binding domain-like"/>
    <property type="match status" value="1"/>
</dbReference>
<dbReference type="SUPFAM" id="SSF49373">
    <property type="entry name" value="Invasin/intimin cell-adhesion fragments"/>
    <property type="match status" value="1"/>
</dbReference>
<dbReference type="SUPFAM" id="SSF50939">
    <property type="entry name" value="Sialidases"/>
    <property type="match status" value="1"/>
</dbReference>
<dbReference type="PROSITE" id="PS50022">
    <property type="entry name" value="FA58C_3"/>
    <property type="match status" value="1"/>
</dbReference>
<sequence>MRNRRKAVSLLTGLLVTAQLFPTAALAADSSESALNKAPGYQDFPAYYSDSAHADDQVTHPDVVVLEEPWNGYRYWAVYTPNVMRISIYENPSIVASSDGVHWVEPEGLSNPIEPQPPSTRYHNCDADMVYNAEYDAMMAYWNWADDQGGGVGAEVRLRISYDGVHWGVPVTYDEMTRVWSKPTSDAERQVADGEDDFITAIASPDRYDMLSPTIVYDDFRDVFILWANNTGDVGYQNGQANFVEMRYSDDGITWGEPVRVNGFLGLDENGQQLAPWHQDVQYVPDLKEFVCISQCFAGRNPDGSVLHLTTSKDGVNWEQVGTKPLLSPGPDGSWDDFQIYRSSFYYEPGSSAGDGTMRVWYSALQKDTNNKMVADSSGNLTIQAKSEDDRIWRIGYAENSFVEMMRVLLDDPGYTTPALVSGNSLMLSAETTSLPTGDVMKLETSFAPVDTSDQVVKYTSSDPDVATVDEFGTITGVSVGSARIMAETREGLSDDLEIAVVENPYTLIPQSNMTATATSVYGGTTEGPASNVLDGNVRTIWHTNYAPKDELPQSITVSFDQPYTVGRFVYTPRQNGTNGIISEYELYAIHQDGSKDLVASGSDWALDAKDKTVSFAPVEAVGLELKAIAGAGGFGTAAELNVYAYGPIEPAPVYVPVDDRDASLVFTGAWNSDSNGSFYEGTARYTNEIGASVEFTFVGTAIRWYGQNDVNFGAAEVYVDGVLAGEVNVYGPAAAQQLLFEADGLAYGKHTIRIVCVSPVVDFDYFSYVGE</sequence>
<name>ADAC_FLAPL</name>
<feature type="signal peptide" evidence="1">
    <location>
        <begin position="1"/>
        <end position="27"/>
    </location>
</feature>
<feature type="chain" id="PRO_0000448571" description="A type blood N-acetyl-alpha-D-galactosamine deacetylase">
    <location>
        <begin position="28"/>
        <end position="772"/>
    </location>
</feature>
<feature type="domain" description="F5/8 type C" evidence="2">
    <location>
        <begin position="494"/>
        <end position="605"/>
    </location>
</feature>
<feature type="region of interest" description="Deacetylase activity" evidence="3">
    <location>
        <begin position="180"/>
        <end position="402"/>
    </location>
</feature>
<feature type="region of interest" description="CBM32 carbohydrate-binding domain" evidence="3">
    <location>
        <begin position="502"/>
        <end position="765"/>
    </location>
</feature>
<feature type="region of interest" description="Not required for activity on soluble substrates" evidence="3">
    <location>
        <begin position="515"/>
        <end position="772"/>
    </location>
</feature>
<feature type="binding site" evidence="3 6">
    <location>
        <position position="87"/>
    </location>
    <ligand>
        <name>substrate</name>
    </ligand>
</feature>
<feature type="binding site" evidence="3 6">
    <location>
        <position position="123"/>
    </location>
    <ligand>
        <name>substrate</name>
    </ligand>
</feature>
<feature type="binding site" evidence="3 5 6">
    <location>
        <position position="126"/>
    </location>
    <ligand>
        <name>a divalent metal cation</name>
        <dbReference type="ChEBI" id="CHEBI:60240"/>
    </ligand>
</feature>
<feature type="binding site" evidence="3 6">
    <location>
        <position position="236"/>
    </location>
    <ligand>
        <name>substrate</name>
    </ligand>
</feature>
<feature type="binding site" evidence="3 5 6">
    <location>
        <position position="278"/>
    </location>
    <ligand>
        <name>a divalent metal cation</name>
        <dbReference type="ChEBI" id="CHEBI:60240"/>
    </ligand>
</feature>
<feature type="mutagenesis site" description="Loss of deacetylase activity." evidence="3">
    <original>E</original>
    <variation>A</variation>
    <variation>L</variation>
    <location>
        <position position="90"/>
    </location>
</feature>
<feature type="mutagenesis site" description="5-fold reduction in deacetylase rate." evidence="3">
    <original>C</original>
    <variation>A</variation>
    <variation>S</variation>
    <location>
        <position position="125"/>
    </location>
</feature>
<feature type="mutagenesis site" description="Dramatic reduction in deacetylase rate." evidence="3">
    <original>D</original>
    <variation>N</variation>
    <location>
        <position position="126"/>
    </location>
</feature>
<feature type="mutagenesis site" description="Very dramatic reduction in deacetylase rate." evidence="3">
    <original>H</original>
    <variation>A</variation>
    <variation>F</variation>
    <location>
        <position position="278"/>
    </location>
</feature>
<feature type="mutagenesis site" description="3000-fold reduction in deacetylase rate." evidence="3">
    <original>Y</original>
    <variation>F</variation>
    <location>
        <position position="341"/>
    </location>
</feature>